<dbReference type="EC" id="3.4.22.-"/>
<dbReference type="SMR" id="P80529"/>
<dbReference type="DrugBank" id="DB12245">
    <property type="generic name" value="Triclabendazole"/>
</dbReference>
<dbReference type="GO" id="GO:0008234">
    <property type="term" value="F:cysteine-type peptidase activity"/>
    <property type="evidence" value="ECO:0007669"/>
    <property type="project" value="UniProtKB-KW"/>
</dbReference>
<dbReference type="GO" id="GO:0006508">
    <property type="term" value="P:proteolysis"/>
    <property type="evidence" value="ECO:0007669"/>
    <property type="project" value="UniProtKB-KW"/>
</dbReference>
<name>CYSB_FASHE</name>
<evidence type="ECO:0000255" key="1">
    <source>
        <dbReference type="PROSITE-ProRule" id="PRU10088"/>
    </source>
</evidence>
<evidence type="ECO:0000255" key="2">
    <source>
        <dbReference type="PROSITE-ProRule" id="PRU10089"/>
    </source>
</evidence>
<evidence type="ECO:0000255" key="3">
    <source>
        <dbReference type="PROSITE-ProRule" id="PRU10090"/>
    </source>
</evidence>
<evidence type="ECO:0000305" key="4"/>
<organism>
    <name type="scientific">Fasciola hepatica</name>
    <name type="common">Liver fluke</name>
    <dbReference type="NCBI Taxonomy" id="6192"/>
    <lineage>
        <taxon>Eukaryota</taxon>
        <taxon>Metazoa</taxon>
        <taxon>Spiralia</taxon>
        <taxon>Lophotrochozoa</taxon>
        <taxon>Platyhelminthes</taxon>
        <taxon>Trematoda</taxon>
        <taxon>Digenea</taxon>
        <taxon>Plagiorchiida</taxon>
        <taxon>Echinostomata</taxon>
        <taxon>Echinostomatoidea</taxon>
        <taxon>Fasciolidae</taxon>
        <taxon>Fasciola</taxon>
    </lineage>
</organism>
<feature type="propeptide" id="PRO_0000026174" description="Activation peptide">
    <location>
        <begin position="1"/>
        <end position="22" status="greater than"/>
    </location>
</feature>
<feature type="chain" id="PRO_0000026175" description="Cathepsin B-like cysteine proteinase">
    <location>
        <begin position="23" status="less than"/>
        <end position="32" status="greater than"/>
    </location>
</feature>
<feature type="non-consecutive residues" evidence="4">
    <location>
        <begin position="22"/>
        <end position="23"/>
    </location>
</feature>
<feature type="non-terminal residue">
    <location>
        <position position="32"/>
    </location>
</feature>
<keyword id="KW-0903">Direct protein sequencing</keyword>
<keyword id="KW-0378">Hydrolase</keyword>
<keyword id="KW-0645">Protease</keyword>
<keyword id="KW-0788">Thiol protease</keyword>
<keyword id="KW-0865">Zymogen</keyword>
<comment type="function">
    <text>Thiol protease.</text>
</comment>
<comment type="developmental stage">
    <text>Expressed at the newly excysted juvenile stage.</text>
</comment>
<comment type="similarity">
    <text evidence="1 2 3">Belongs to the peptidase C1 family.</text>
</comment>
<sequence length="32" mass="3940">KPNYKRQFEPFSDELIHYINLEDLPESFDARQ</sequence>
<accession>P80529</accession>
<accession>P80531</accession>
<reference key="1">
    <citation type="journal article" date="1995" name="Biochem. Biophys. Res. Commun.">
        <title>Fasciola hepatica: rapid identification of newly excysted juvenile proteins.</title>
        <authorList>
            <person name="Tkalcevic J."/>
            <person name="Ashman K."/>
            <person name="Meeusen E."/>
        </authorList>
    </citation>
    <scope>PROTEIN SEQUENCE</scope>
</reference>
<proteinExistence type="evidence at protein level"/>
<protein>
    <recommendedName>
        <fullName>Cathepsin B-like cysteine proteinase</fullName>
        <ecNumber>3.4.22.-</ecNumber>
    </recommendedName>
    <alternativeName>
        <fullName>Newly excysted juvenile proteins 5 and 7</fullName>
    </alternativeName>
</protein>